<proteinExistence type="inferred from homology"/>
<sequence length="402" mass="42099">MVTLRRLAVLLGAIPAALAAPTTQKREVVPNKYIVTLKEGASNFDSHISWVSDIHKRSLSRRSTAGIEKEFHIDTFNAYVGEFDETTIEEIKNNPDVLEVEEDQIWHLFDEQDEGEFSTAALVTQNGAWGLGTISHRQPGSTSYIYDDSAGSGTYAYVVDTGILESHNEFSGRAITGYNAVGGSNADTNGHGTHVAGTIGGRTYGVAKNTNLIAVKVFRGSSSSTSIILDGFNWAVNDIINRGRQNKAAISMSLGGGYSSAFNNAVNTAYSRGVLSVVAAGNDNQNAANYSPASAANAITVGSIASNWARSSFSNYGSVLDIFAPGTSILSAWIGGNSATNTISGTSMATPHVTGVVLYLQALEGLTTSGAAARLNALATTGRVSNPGSGSPNRILYNGNGA</sequence>
<dbReference type="EC" id="3.4.21.-"/>
<dbReference type="EMBL" id="D00923">
    <property type="protein sequence ID" value="BAA00765.1"/>
    <property type="molecule type" value="Genomic_DNA"/>
</dbReference>
<dbReference type="PIR" id="JU0332">
    <property type="entry name" value="JU0332"/>
</dbReference>
<dbReference type="SMR" id="P29118"/>
<dbReference type="GO" id="GO:0005576">
    <property type="term" value="C:extracellular region"/>
    <property type="evidence" value="ECO:0007669"/>
    <property type="project" value="UniProtKB-ARBA"/>
</dbReference>
<dbReference type="GO" id="GO:0004252">
    <property type="term" value="F:serine-type endopeptidase activity"/>
    <property type="evidence" value="ECO:0007669"/>
    <property type="project" value="InterPro"/>
</dbReference>
<dbReference type="GO" id="GO:0006508">
    <property type="term" value="P:proteolysis"/>
    <property type="evidence" value="ECO:0007669"/>
    <property type="project" value="UniProtKB-KW"/>
</dbReference>
<dbReference type="CDD" id="cd04077">
    <property type="entry name" value="Peptidases_S8_PCSK9_ProteinaseK_like"/>
    <property type="match status" value="1"/>
</dbReference>
<dbReference type="FunFam" id="3.40.50.200:FF:000014">
    <property type="entry name" value="Proteinase K"/>
    <property type="match status" value="1"/>
</dbReference>
<dbReference type="Gene3D" id="3.30.70.80">
    <property type="entry name" value="Peptidase S8 propeptide/proteinase inhibitor I9"/>
    <property type="match status" value="1"/>
</dbReference>
<dbReference type="Gene3D" id="3.40.50.200">
    <property type="entry name" value="Peptidase S8/S53 domain"/>
    <property type="match status" value="1"/>
</dbReference>
<dbReference type="InterPro" id="IPR034193">
    <property type="entry name" value="PCSK9_ProteinaseK-like"/>
</dbReference>
<dbReference type="InterPro" id="IPR000209">
    <property type="entry name" value="Peptidase_S8/S53_dom"/>
</dbReference>
<dbReference type="InterPro" id="IPR036852">
    <property type="entry name" value="Peptidase_S8/S53_dom_sf"/>
</dbReference>
<dbReference type="InterPro" id="IPR023827">
    <property type="entry name" value="Peptidase_S8_Asp-AS"/>
</dbReference>
<dbReference type="InterPro" id="IPR022398">
    <property type="entry name" value="Peptidase_S8_His-AS"/>
</dbReference>
<dbReference type="InterPro" id="IPR023828">
    <property type="entry name" value="Peptidase_S8_Ser-AS"/>
</dbReference>
<dbReference type="InterPro" id="IPR050131">
    <property type="entry name" value="Peptidase_S8_subtilisin-like"/>
</dbReference>
<dbReference type="InterPro" id="IPR015500">
    <property type="entry name" value="Peptidase_S8_subtilisin-rel"/>
</dbReference>
<dbReference type="InterPro" id="IPR010259">
    <property type="entry name" value="S8pro/Inhibitor_I9"/>
</dbReference>
<dbReference type="InterPro" id="IPR037045">
    <property type="entry name" value="S8pro/Inhibitor_I9_sf"/>
</dbReference>
<dbReference type="PANTHER" id="PTHR43806:SF58">
    <property type="entry name" value="ALKALINE PROTEASE 1-RELATED"/>
    <property type="match status" value="1"/>
</dbReference>
<dbReference type="PANTHER" id="PTHR43806">
    <property type="entry name" value="PEPTIDASE S8"/>
    <property type="match status" value="1"/>
</dbReference>
<dbReference type="Pfam" id="PF05922">
    <property type="entry name" value="Inhibitor_I9"/>
    <property type="match status" value="1"/>
</dbReference>
<dbReference type="Pfam" id="PF00082">
    <property type="entry name" value="Peptidase_S8"/>
    <property type="match status" value="1"/>
</dbReference>
<dbReference type="PRINTS" id="PR00723">
    <property type="entry name" value="SUBTILISIN"/>
</dbReference>
<dbReference type="SUPFAM" id="SSF54897">
    <property type="entry name" value="Protease propeptides/inhibitors"/>
    <property type="match status" value="1"/>
</dbReference>
<dbReference type="SUPFAM" id="SSF52743">
    <property type="entry name" value="Subtilisin-like"/>
    <property type="match status" value="1"/>
</dbReference>
<dbReference type="PROSITE" id="PS51892">
    <property type="entry name" value="SUBTILASE"/>
    <property type="match status" value="1"/>
</dbReference>
<dbReference type="PROSITE" id="PS00136">
    <property type="entry name" value="SUBTILASE_ASP"/>
    <property type="match status" value="1"/>
</dbReference>
<dbReference type="PROSITE" id="PS00137">
    <property type="entry name" value="SUBTILASE_HIS"/>
    <property type="match status" value="1"/>
</dbReference>
<dbReference type="PROSITE" id="PS00138">
    <property type="entry name" value="SUBTILASE_SER"/>
    <property type="match status" value="1"/>
</dbReference>
<organism>
    <name type="scientific">Hapsidospora chrysogena</name>
    <name type="common">Acremonium chrysogenum</name>
    <dbReference type="NCBI Taxonomy" id="5044"/>
    <lineage>
        <taxon>Eukaryota</taxon>
        <taxon>Fungi</taxon>
        <taxon>Dikarya</taxon>
        <taxon>Ascomycota</taxon>
        <taxon>Pezizomycotina</taxon>
        <taxon>Sordariomycetes</taxon>
        <taxon>Hypocreomycetidae</taxon>
        <taxon>Hypocreales</taxon>
        <taxon>Bionectriaceae</taxon>
        <taxon>Hapsidospora</taxon>
    </lineage>
</organism>
<protein>
    <recommendedName>
        <fullName>Alkaline proteinase</fullName>
        <shortName>ALP</shortName>
        <ecNumber>3.4.21.-</ecNumber>
    </recommendedName>
</protein>
<reference key="1">
    <citation type="journal article" date="1991" name="Agric. Biol. Chem.">
        <title>Cloning and nucleotide sequences of the complementary and genomic DNAs for the alkaline protease from Acremonium chrysogenum.</title>
        <authorList>
            <person name="Isogai T."/>
            <person name="Fukagawa M."/>
            <person name="Kojo H."/>
            <person name="Kohsaka M."/>
            <person name="Aoki H."/>
            <person name="Imanaka H."/>
        </authorList>
    </citation>
    <scope>NUCLEOTIDE SEQUENCE [GENOMIC DNA]</scope>
</reference>
<keyword id="KW-0378">Hydrolase</keyword>
<keyword id="KW-0645">Protease</keyword>
<keyword id="KW-0720">Serine protease</keyword>
<keyword id="KW-0732">Signal</keyword>
<keyword id="KW-0865">Zymogen</keyword>
<gene>
    <name type="primary">ALP</name>
</gene>
<accession>P29118</accession>
<evidence type="ECO:0000255" key="1"/>
<evidence type="ECO:0000255" key="2">
    <source>
        <dbReference type="PROSITE-ProRule" id="PRU01240"/>
    </source>
</evidence>
<evidence type="ECO:0000256" key="3">
    <source>
        <dbReference type="SAM" id="MobiDB-lite"/>
    </source>
</evidence>
<evidence type="ECO:0000305" key="4"/>
<comment type="similarity">
    <text evidence="4">Belongs to the peptidase S8 family.</text>
</comment>
<name>ALP_HAPCH</name>
<feature type="signal peptide" evidence="1">
    <location>
        <begin position="1"/>
        <end position="20"/>
    </location>
</feature>
<feature type="propeptide" id="PRO_0000026986" evidence="1">
    <location>
        <begin position="21"/>
        <end position="120"/>
    </location>
</feature>
<feature type="chain" id="PRO_0000026987" description="Alkaline proteinase">
    <location>
        <begin position="121"/>
        <end position="402"/>
    </location>
</feature>
<feature type="domain" description="Inhibitor I9" evidence="1">
    <location>
        <begin position="32"/>
        <end position="108"/>
    </location>
</feature>
<feature type="domain" description="Peptidase S8" evidence="2">
    <location>
        <begin position="128"/>
        <end position="402"/>
    </location>
</feature>
<feature type="region of interest" description="Disordered" evidence="3">
    <location>
        <begin position="382"/>
        <end position="402"/>
    </location>
</feature>
<feature type="compositionally biased region" description="Polar residues" evidence="3">
    <location>
        <begin position="382"/>
        <end position="392"/>
    </location>
</feature>
<feature type="active site" description="Charge relay system" evidence="2">
    <location>
        <position position="160"/>
    </location>
</feature>
<feature type="active site" description="Charge relay system" evidence="2">
    <location>
        <position position="191"/>
    </location>
</feature>
<feature type="active site" description="Charge relay system" evidence="2">
    <location>
        <position position="347"/>
    </location>
</feature>